<keyword id="KW-0027">Amidation</keyword>
<keyword id="KW-0903">Direct protein sequencing</keyword>
<keyword id="KW-0527">Neuropeptide</keyword>
<keyword id="KW-0964">Secreted</keyword>
<feature type="peptide" id="PRO_0000378690" description="Pyrokinin-5" evidence="3">
    <location>
        <begin position="1"/>
        <end position="16"/>
    </location>
</feature>
<feature type="modified residue" description="Leucine amide" evidence="3">
    <location>
        <position position="16"/>
    </location>
</feature>
<dbReference type="GO" id="GO:0005576">
    <property type="term" value="C:extracellular region"/>
    <property type="evidence" value="ECO:0007669"/>
    <property type="project" value="UniProtKB-SubCell"/>
</dbReference>
<dbReference type="GO" id="GO:0005184">
    <property type="term" value="F:neuropeptide hormone activity"/>
    <property type="evidence" value="ECO:0007669"/>
    <property type="project" value="InterPro"/>
</dbReference>
<dbReference type="GO" id="GO:0007218">
    <property type="term" value="P:neuropeptide signaling pathway"/>
    <property type="evidence" value="ECO:0007669"/>
    <property type="project" value="UniProtKB-KW"/>
</dbReference>
<dbReference type="InterPro" id="IPR001484">
    <property type="entry name" value="Pyrokinin_CS"/>
</dbReference>
<dbReference type="PROSITE" id="PS00539">
    <property type="entry name" value="PYROKININ"/>
    <property type="match status" value="1"/>
</dbReference>
<organism>
    <name type="scientific">Ergaula capucina</name>
    <name type="common">Beetle roach</name>
    <dbReference type="NCBI Taxonomy" id="76901"/>
    <lineage>
        <taxon>Eukaryota</taxon>
        <taxon>Metazoa</taxon>
        <taxon>Ecdysozoa</taxon>
        <taxon>Arthropoda</taxon>
        <taxon>Hexapoda</taxon>
        <taxon>Insecta</taxon>
        <taxon>Pterygota</taxon>
        <taxon>Neoptera</taxon>
        <taxon>Polyneoptera</taxon>
        <taxon>Dictyoptera</taxon>
        <taxon>Blattodea</taxon>
        <taxon>Corydioidea</taxon>
        <taxon>Corydiidae</taxon>
        <taxon>Ergaula</taxon>
    </lineage>
</organism>
<comment type="function">
    <text evidence="1">Myoactive.</text>
</comment>
<comment type="subcellular location">
    <subcellularLocation>
        <location evidence="5">Secreted</location>
    </subcellularLocation>
</comment>
<comment type="similarity">
    <text evidence="2">Belongs to the pyrokinin family.</text>
</comment>
<reference evidence="5" key="1">
    <citation type="journal article" date="2009" name="BMC Evol. Biol.">
        <title>A proteomic approach for studying insect phylogeny: CAPA peptides of ancient insect taxa (Dictyoptera, Blattoptera) as a test case.</title>
        <authorList>
            <person name="Roth S."/>
            <person name="Fromm B."/>
            <person name="Gaede G."/>
            <person name="Predel R."/>
        </authorList>
    </citation>
    <scope>PROTEIN SEQUENCE</scope>
    <scope>AMIDATION AT LEU-16</scope>
    <source>
        <tissue evidence="3">Abdominal perisympathetic organs</tissue>
    </source>
</reference>
<proteinExistence type="evidence at protein level"/>
<sequence length="16" mass="1656">SASSGESSGMWFGPRL</sequence>
<accession>P85611</accession>
<protein>
    <recommendedName>
        <fullName evidence="1">Pyrokinin-5</fullName>
    </recommendedName>
    <alternativeName>
        <fullName evidence="4">ErgCa-Capa-PK</fullName>
    </alternativeName>
    <alternativeName>
        <fullName evidence="1">FXPRL-amide</fullName>
    </alternativeName>
</protein>
<name>PPK5_ERGCA</name>
<evidence type="ECO:0000250" key="1">
    <source>
        <dbReference type="UniProtKB" id="P82617"/>
    </source>
</evidence>
<evidence type="ECO:0000255" key="2"/>
<evidence type="ECO:0000269" key="3">
    <source>
    </source>
</evidence>
<evidence type="ECO:0000303" key="4">
    <source>
    </source>
</evidence>
<evidence type="ECO:0000305" key="5"/>